<keyword id="KW-0445">Lipid transport</keyword>
<keyword id="KW-0446">Lipid-binding</keyword>
<keyword id="KW-0496">Mitochondrion</keyword>
<keyword id="KW-1185">Reference proteome</keyword>
<keyword id="KW-0755">Steroidogenesis</keyword>
<keyword id="KW-0809">Transit peptide</keyword>
<keyword id="KW-0813">Transport</keyword>
<accession>Q9DG09</accession>
<proteinExistence type="evidence at transcript level"/>
<protein>
    <recommendedName>
        <fullName>Steroidogenic acute regulatory protein, mitochondrial</fullName>
        <shortName>StAR</shortName>
    </recommendedName>
    <alternativeName>
        <fullName>START domain-containing protein 1</fullName>
        <shortName>StARD1</shortName>
    </alternativeName>
</protein>
<comment type="function">
    <text evidence="2">Plays a key role in steroid hormone synthesis by enhancing the metabolism of cholesterol into pregnenolone. Mediates the transfer of cholesterol from the outer mitochondrial membrane to the inner mitochondrial membrane where it is cleaved to pregnenolone (By similarity).</text>
</comment>
<comment type="catalytic activity">
    <reaction evidence="2">
        <text>cholesterol(in) = cholesterol(out)</text>
        <dbReference type="Rhea" id="RHEA:39747"/>
        <dbReference type="ChEBI" id="CHEBI:16113"/>
    </reaction>
</comment>
<comment type="pathway">
    <text evidence="2">Steroid metabolism; cholesterol metabolism.</text>
</comment>
<comment type="subunit">
    <text evidence="4">May interact with TSPO.</text>
</comment>
<comment type="subcellular location">
    <subcellularLocation>
        <location evidence="3">Mitochondrion</location>
    </subcellularLocation>
</comment>
<comment type="tissue specificity">
    <text>Expressed principally in steroidogenic tissues as ovary (granulosa from the largest preovulatory follicle and stromal tissues) and adrenals.</text>
</comment>
<reference key="1">
    <citation type="journal article" date="2000" name="Mol. Cell. Endocrinol.">
        <title>Conservation of steroidogenic acute regulatory (StAR) protein structure and expression in vertebrates.</title>
        <authorList>
            <person name="Bauer M.P."/>
            <person name="Bridgham J.T."/>
            <person name="Langenau D.M."/>
            <person name="Johnson A.L."/>
            <person name="Goetz F.W."/>
        </authorList>
    </citation>
    <scope>NUCLEOTIDE SEQUENCE [MRNA]</scope>
    <source>
        <tissue>Embryo</tissue>
    </source>
</reference>
<feature type="transit peptide" description="Mitochondrion" evidence="1">
    <location>
        <begin position="1"/>
        <end position="63"/>
    </location>
</feature>
<feature type="chain" id="PRO_0000033322" description="Steroidogenic acute regulatory protein, mitochondrial">
    <location>
        <begin position="64"/>
        <end position="281"/>
    </location>
</feature>
<feature type="domain" description="START" evidence="5">
    <location>
        <begin position="67"/>
        <end position="280"/>
    </location>
</feature>
<name>STAR_CHICK</name>
<dbReference type="EMBL" id="AF220436">
    <property type="protein sequence ID" value="AAG28594.1"/>
    <property type="molecule type" value="mRNA"/>
</dbReference>
<dbReference type="RefSeq" id="NP_990017.1">
    <property type="nucleotide sequence ID" value="NM_204686.3"/>
</dbReference>
<dbReference type="SMR" id="Q9DG09"/>
<dbReference type="FunCoup" id="Q9DG09">
    <property type="interactions" value="13"/>
</dbReference>
<dbReference type="STRING" id="9031.ENSGALP00000005119"/>
<dbReference type="PaxDb" id="9031-ENSGALP00000005119"/>
<dbReference type="GeneID" id="395421"/>
<dbReference type="KEGG" id="gga:395421"/>
<dbReference type="CTD" id="6770"/>
<dbReference type="VEuPathDB" id="HostDB:geneid_395421"/>
<dbReference type="eggNOG" id="KOG3845">
    <property type="taxonomic scope" value="Eukaryota"/>
</dbReference>
<dbReference type="HOGENOM" id="CLU_093200_1_0_1"/>
<dbReference type="InParanoid" id="Q9DG09"/>
<dbReference type="OMA" id="PTPSAWI"/>
<dbReference type="OrthoDB" id="74575at2759"/>
<dbReference type="PhylomeDB" id="Q9DG09"/>
<dbReference type="TreeFam" id="TF313869"/>
<dbReference type="Reactome" id="R-GGA-196108">
    <property type="pathway name" value="Pregnenolone biosynthesis"/>
</dbReference>
<dbReference type="Reactome" id="R-GGA-9837999">
    <property type="pathway name" value="Mitochondrial protein degradation"/>
</dbReference>
<dbReference type="UniPathway" id="UPA00296"/>
<dbReference type="PRO" id="PR:Q9DG09"/>
<dbReference type="Proteomes" id="UP000000539">
    <property type="component" value="Chromosome 22"/>
</dbReference>
<dbReference type="Bgee" id="ENSGALG00000003242">
    <property type="expression patterns" value="Expressed in testis and 7 other cell types or tissues"/>
</dbReference>
<dbReference type="GO" id="GO:0005739">
    <property type="term" value="C:mitochondrion"/>
    <property type="evidence" value="ECO:0007669"/>
    <property type="project" value="UniProtKB-SubCell"/>
</dbReference>
<dbReference type="GO" id="GO:0015485">
    <property type="term" value="F:cholesterol binding"/>
    <property type="evidence" value="ECO:0000318"/>
    <property type="project" value="GO_Central"/>
</dbReference>
<dbReference type="GO" id="GO:0120020">
    <property type="term" value="F:cholesterol transfer activity"/>
    <property type="evidence" value="ECO:0007669"/>
    <property type="project" value="InterPro"/>
</dbReference>
<dbReference type="GO" id="GO:0008203">
    <property type="term" value="P:cholesterol metabolic process"/>
    <property type="evidence" value="ECO:0007669"/>
    <property type="project" value="UniProtKB-UniPathway"/>
</dbReference>
<dbReference type="GO" id="GO:0032367">
    <property type="term" value="P:intracellular cholesterol transport"/>
    <property type="evidence" value="ECO:0000318"/>
    <property type="project" value="GO_Central"/>
</dbReference>
<dbReference type="GO" id="GO:0050810">
    <property type="term" value="P:regulation of steroid biosynthetic process"/>
    <property type="evidence" value="ECO:0000318"/>
    <property type="project" value="GO_Central"/>
</dbReference>
<dbReference type="GO" id="GO:0006694">
    <property type="term" value="P:steroid biosynthetic process"/>
    <property type="evidence" value="ECO:0000318"/>
    <property type="project" value="GO_Central"/>
</dbReference>
<dbReference type="CDD" id="cd08905">
    <property type="entry name" value="START_STARD1-like"/>
    <property type="match status" value="1"/>
</dbReference>
<dbReference type="FunFam" id="3.30.530.20:FF:000015">
    <property type="entry name" value="Steroidogenic acute regulatory protein, mitochondrial"/>
    <property type="match status" value="1"/>
</dbReference>
<dbReference type="Gene3D" id="3.30.530.20">
    <property type="match status" value="1"/>
</dbReference>
<dbReference type="InterPro" id="IPR029866">
    <property type="entry name" value="StAR"/>
</dbReference>
<dbReference type="InterPro" id="IPR000799">
    <property type="entry name" value="StAR-like"/>
</dbReference>
<dbReference type="InterPro" id="IPR023393">
    <property type="entry name" value="START-like_dom_sf"/>
</dbReference>
<dbReference type="InterPro" id="IPR002913">
    <property type="entry name" value="START_lipid-bd_dom"/>
</dbReference>
<dbReference type="PANTHER" id="PTHR46489">
    <property type="entry name" value="STEROIDOGENIC ACUTE REGULATORY PROTEIN, MITOCHONDRIAL"/>
    <property type="match status" value="1"/>
</dbReference>
<dbReference type="PANTHER" id="PTHR46489:SF1">
    <property type="entry name" value="STEROIDOGENIC ACUTE REGULATORY PROTEIN, MITOCHONDRIAL"/>
    <property type="match status" value="1"/>
</dbReference>
<dbReference type="Pfam" id="PF01852">
    <property type="entry name" value="START"/>
    <property type="match status" value="1"/>
</dbReference>
<dbReference type="PRINTS" id="PR00978">
    <property type="entry name" value="STARPROTEIN"/>
</dbReference>
<dbReference type="SMART" id="SM00234">
    <property type="entry name" value="START"/>
    <property type="match status" value="1"/>
</dbReference>
<dbReference type="SUPFAM" id="SSF55961">
    <property type="entry name" value="Bet v1-like"/>
    <property type="match status" value="1"/>
</dbReference>
<dbReference type="PROSITE" id="PS50848">
    <property type="entry name" value="START"/>
    <property type="match status" value="1"/>
</dbReference>
<gene>
    <name type="primary">STAR</name>
</gene>
<evidence type="ECO:0000250" key="1"/>
<evidence type="ECO:0000250" key="2">
    <source>
        <dbReference type="UniProtKB" id="P49675"/>
    </source>
</evidence>
<evidence type="ECO:0000250" key="3">
    <source>
        <dbReference type="UniProtKB" id="P51557"/>
    </source>
</evidence>
<evidence type="ECO:0000250" key="4">
    <source>
        <dbReference type="UniProtKB" id="P79245"/>
    </source>
</evidence>
<evidence type="ECO:0000255" key="5">
    <source>
        <dbReference type="PROSITE-ProRule" id="PRU00197"/>
    </source>
</evidence>
<sequence>MLPATFKLCAAISYQHLRNVTGLRRQAAVAISQELSKLSCRSTGPSTWISQVRRRSSLLSSRLEEKPFSEMEMSYIKQGEEALQKSLSILGDQEGWKTETVADNGDKVLSKVLPDVGKVFRLEVVVDQPLDAVYSELVDNMEQMGDWNPSVKEVKILQRVGKDTLITHETAAAPPGNIVGPRDFVSVRCSRRRGSTCVLAGMSTTHGAMPEQQGFIRAENGPTCMVLRPLAGSPSQTKLTWLLSIDLKGWLPKTIINQVLSQTQVDFAKHLRQRMARAAGC</sequence>
<organism>
    <name type="scientific">Gallus gallus</name>
    <name type="common">Chicken</name>
    <dbReference type="NCBI Taxonomy" id="9031"/>
    <lineage>
        <taxon>Eukaryota</taxon>
        <taxon>Metazoa</taxon>
        <taxon>Chordata</taxon>
        <taxon>Craniata</taxon>
        <taxon>Vertebrata</taxon>
        <taxon>Euteleostomi</taxon>
        <taxon>Archelosauria</taxon>
        <taxon>Archosauria</taxon>
        <taxon>Dinosauria</taxon>
        <taxon>Saurischia</taxon>
        <taxon>Theropoda</taxon>
        <taxon>Coelurosauria</taxon>
        <taxon>Aves</taxon>
        <taxon>Neognathae</taxon>
        <taxon>Galloanserae</taxon>
        <taxon>Galliformes</taxon>
        <taxon>Phasianidae</taxon>
        <taxon>Phasianinae</taxon>
        <taxon>Gallus</taxon>
    </lineage>
</organism>